<sequence>MTKLLNFVILASVLTVTAHALTYDLNNSDELFKNFAIKYNKTYVSDEERAIKLENFKNNLKMINEKNMASKYAVFDINEYSDLNKNALLRRTTGFRLGLKKNPSAFTMTECSVVVIKDEPQALLPETLDWRDKHGVTPVKNQMECGSCWAFSTIANIESLYNIKYDKALNLSEQHLVNCDNINNGCAGGLMHWALESILQEGGVVSAENEPYYGFDGVCKKSPFELSISGSRRYVLQNENKLRELLVVNGPISVAIDVSDLINYKAGIADICENNEGLNHAVLLVGYGVKNDVPYWILKNSWGAEWGEEGYFRVQRDKNSCGMMNEYASSAIL</sequence>
<dbReference type="EC" id="3.4.22.50"/>
<dbReference type="EMBL" id="U53466">
    <property type="protein sequence ID" value="AAK70678.1"/>
    <property type="molecule type" value="Genomic_DNA"/>
</dbReference>
<dbReference type="SMR" id="O91466"/>
<dbReference type="MEROPS" id="C01.047"/>
<dbReference type="GlyCosmos" id="O91466">
    <property type="glycosylation" value="1 site, No reported glycans"/>
</dbReference>
<dbReference type="KEGG" id="vg:921370"/>
<dbReference type="Proteomes" id="UP000009249">
    <property type="component" value="Segment"/>
</dbReference>
<dbReference type="GO" id="GO:0008234">
    <property type="term" value="F:cysteine-type peptidase activity"/>
    <property type="evidence" value="ECO:0007669"/>
    <property type="project" value="UniProtKB-KW"/>
</dbReference>
<dbReference type="GO" id="GO:0006508">
    <property type="term" value="P:proteolysis"/>
    <property type="evidence" value="ECO:0007669"/>
    <property type="project" value="UniProtKB-KW"/>
</dbReference>
<dbReference type="CDD" id="cd02248">
    <property type="entry name" value="Peptidase_C1A"/>
    <property type="match status" value="1"/>
</dbReference>
<dbReference type="Gene3D" id="3.90.70.10">
    <property type="entry name" value="Cysteine proteinases"/>
    <property type="match status" value="1"/>
</dbReference>
<dbReference type="InterPro" id="IPR038765">
    <property type="entry name" value="Papain-like_cys_pep_sf"/>
</dbReference>
<dbReference type="InterPro" id="IPR025661">
    <property type="entry name" value="Pept_asp_AS"/>
</dbReference>
<dbReference type="InterPro" id="IPR000169">
    <property type="entry name" value="Pept_cys_AS"/>
</dbReference>
<dbReference type="InterPro" id="IPR025660">
    <property type="entry name" value="Pept_his_AS"/>
</dbReference>
<dbReference type="InterPro" id="IPR013128">
    <property type="entry name" value="Peptidase_C1A"/>
</dbReference>
<dbReference type="InterPro" id="IPR000668">
    <property type="entry name" value="Peptidase_C1A_C"/>
</dbReference>
<dbReference type="InterPro" id="IPR039417">
    <property type="entry name" value="Peptidase_C1A_papain-like"/>
</dbReference>
<dbReference type="InterPro" id="IPR013201">
    <property type="entry name" value="Prot_inhib_I29"/>
</dbReference>
<dbReference type="PANTHER" id="PTHR12411">
    <property type="entry name" value="CYSTEINE PROTEASE FAMILY C1-RELATED"/>
    <property type="match status" value="1"/>
</dbReference>
<dbReference type="Pfam" id="PF08246">
    <property type="entry name" value="Inhibitor_I29"/>
    <property type="match status" value="1"/>
</dbReference>
<dbReference type="Pfam" id="PF00112">
    <property type="entry name" value="Peptidase_C1"/>
    <property type="match status" value="1"/>
</dbReference>
<dbReference type="PRINTS" id="PR00705">
    <property type="entry name" value="PAPAIN"/>
</dbReference>
<dbReference type="SMART" id="SM00848">
    <property type="entry name" value="Inhibitor_I29"/>
    <property type="match status" value="1"/>
</dbReference>
<dbReference type="SMART" id="SM00645">
    <property type="entry name" value="Pept_C1"/>
    <property type="match status" value="1"/>
</dbReference>
<dbReference type="SUPFAM" id="SSF54001">
    <property type="entry name" value="Cysteine proteinases"/>
    <property type="match status" value="1"/>
</dbReference>
<dbReference type="PROSITE" id="PS00640">
    <property type="entry name" value="THIOL_PROTEASE_ASN"/>
    <property type="match status" value="1"/>
</dbReference>
<dbReference type="PROSITE" id="PS00139">
    <property type="entry name" value="THIOL_PROTEASE_CYS"/>
    <property type="match status" value="1"/>
</dbReference>
<dbReference type="PROSITE" id="PS00639">
    <property type="entry name" value="THIOL_PROTEASE_HIS"/>
    <property type="match status" value="1"/>
</dbReference>
<protein>
    <recommendedName>
        <fullName>Viral cathepsin</fullName>
        <shortName>V-cath</shortName>
        <ecNumber>3.4.22.50</ecNumber>
    </recommendedName>
    <alternativeName>
        <fullName>Cysteine proteinase</fullName>
        <shortName>CP</shortName>
    </alternativeName>
</protein>
<accession>O91466</accession>
<proteinExistence type="inferred from homology"/>
<keyword id="KW-1015">Disulfide bond</keyword>
<keyword id="KW-0325">Glycoprotein</keyword>
<keyword id="KW-0378">Hydrolase</keyword>
<keyword id="KW-0645">Protease</keyword>
<keyword id="KW-1185">Reference proteome</keyword>
<keyword id="KW-0732">Signal</keyword>
<keyword id="KW-0788">Thiol protease</keyword>
<keyword id="KW-0865">Zymogen</keyword>
<organism>
    <name type="scientific">Cydia pomonella granulosis virus (isolate Mexico/1963)</name>
    <name type="common">CpGV</name>
    <name type="synonym">Cydia pomonella granulovirus</name>
    <dbReference type="NCBI Taxonomy" id="654905"/>
    <lineage>
        <taxon>Viruses</taxon>
        <taxon>Viruses incertae sedis</taxon>
        <taxon>Naldaviricetes</taxon>
        <taxon>Lefavirales</taxon>
        <taxon>Baculoviridae</taxon>
        <taxon>Betabaculovirus</taxon>
        <taxon>Betabaculovirus cypomonellae</taxon>
    </lineage>
</organism>
<comment type="function">
    <text evidence="1">Cysteine protease that plays an essential role in host liquefaction to facilitate horizontal transmission of the virus. May participate in the degradation of foreign protein expressed by the baculovirus system (By similarity).</text>
</comment>
<comment type="catalytic activity">
    <reaction>
        <text>Endopeptidase of broad specificity, hydrolyzing substrates of both cathepsin L and cathepsin B.</text>
        <dbReference type="EC" id="3.4.22.50"/>
    </reaction>
</comment>
<comment type="PTM">
    <text evidence="1">Synthesized as an inactive proenzyme and activated by proteolytic removal of the inhibitory propeptide.</text>
</comment>
<comment type="similarity">
    <text evidence="3 4 5">Belongs to the peptidase C1 family.</text>
</comment>
<gene>
    <name type="primary">VCATH</name>
    <name type="synonym">ORF8R</name>
</gene>
<reference key="1">
    <citation type="journal article" date="1998" name="J. Gen. Virol.">
        <title>Identification and characterization of the Cydia pomonella granulovirus cathepsin and chitinase genes.</title>
        <authorList>
            <person name="Kang W."/>
            <person name="Tristem M."/>
            <person name="Maeda S."/>
            <person name="Crook N.E."/>
            <person name="O'Reilly D.R."/>
        </authorList>
    </citation>
    <scope>NUCLEOTIDE SEQUENCE [GENOMIC DNA]</scope>
    <source>
        <strain>Mexican 1</strain>
    </source>
</reference>
<reference key="2">
    <citation type="journal article" date="2001" name="J. Gen. Virol.">
        <title>The complete sequence of the Cydia pomonella granulovirus genome.</title>
        <authorList>
            <person name="Luque T."/>
            <person name="Finch R."/>
            <person name="Crook N."/>
            <person name="O'Reilly D.R."/>
            <person name="Winstanley D."/>
        </authorList>
    </citation>
    <scope>NUCLEOTIDE SEQUENCE [LARGE SCALE GENOMIC DNA]</scope>
    <source>
        <strain>Mexican 1</strain>
    </source>
</reference>
<evidence type="ECO:0000250" key="1"/>
<evidence type="ECO:0000255" key="2"/>
<evidence type="ECO:0000255" key="3">
    <source>
        <dbReference type="PROSITE-ProRule" id="PRU10088"/>
    </source>
</evidence>
<evidence type="ECO:0000255" key="4">
    <source>
        <dbReference type="PROSITE-ProRule" id="PRU10089"/>
    </source>
</evidence>
<evidence type="ECO:0000255" key="5">
    <source>
        <dbReference type="PROSITE-ProRule" id="PRU10090"/>
    </source>
</evidence>
<organismHost>
    <name type="scientific">Cydia pomonella</name>
    <name type="common">Codling moth</name>
    <dbReference type="NCBI Taxonomy" id="82600"/>
</organismHost>
<name>CATV_GVCPM</name>
<feature type="signal peptide" evidence="2">
    <location>
        <begin position="1"/>
        <end position="20"/>
    </location>
</feature>
<feature type="propeptide" id="PRO_0000322218" description="Activation peptide" evidence="2">
    <location>
        <begin position="21"/>
        <end position="124"/>
    </location>
</feature>
<feature type="chain" id="PRO_0000050588" description="Viral cathepsin">
    <location>
        <begin position="125"/>
        <end position="333"/>
    </location>
</feature>
<feature type="active site" evidence="1">
    <location>
        <position position="148"/>
    </location>
</feature>
<feature type="active site" evidence="1">
    <location>
        <position position="280"/>
    </location>
</feature>
<feature type="active site" evidence="1">
    <location>
        <position position="300"/>
    </location>
</feature>
<feature type="glycosylation site" description="N-linked (GlcNAc...) asparagine; by host" evidence="2">
    <location>
        <position position="170"/>
    </location>
</feature>
<feature type="disulfide bond" evidence="1">
    <location>
        <begin position="145"/>
        <end position="186"/>
    </location>
</feature>
<feature type="disulfide bond" evidence="1">
    <location>
        <begin position="179"/>
        <end position="219"/>
    </location>
</feature>
<feature type="disulfide bond" evidence="1">
    <location>
        <begin position="272"/>
        <end position="321"/>
    </location>
</feature>